<keyword id="KW-0436">Ligase</keyword>
<keyword id="KW-0511">Multifunctional enzyme</keyword>
<keyword id="KW-0596">Phosphopantetheine</keyword>
<keyword id="KW-0597">Phosphoprotein</keyword>
<keyword id="KW-0677">Repeat</keyword>
<gene>
    <name evidence="9" type="primary">cmdD</name>
</gene>
<protein>
    <recommendedName>
        <fullName evidence="7">Chondramide synthase cmdD</fullName>
    </recommendedName>
    <domain>
        <recommendedName>
            <fullName>ATP-dependent phenylalanine adenylase</fullName>
            <shortName>PheA</shortName>
        </recommendedName>
        <alternativeName>
            <fullName>Phenylalanine activase</fullName>
        </alternativeName>
    </domain>
    <domain>
        <recommendedName>
            <fullName>ATP-dependent tyrosine adenylase</fullName>
            <shortName>TrpA</shortName>
        </recommendedName>
        <alternativeName>
            <fullName>Tyrosine activase</fullName>
        </alternativeName>
    </domain>
</protein>
<evidence type="ECO:0000250" key="1">
    <source>
        <dbReference type="UniProtKB" id="P0C061"/>
    </source>
</evidence>
<evidence type="ECO:0000255" key="2"/>
<evidence type="ECO:0000255" key="3">
    <source>
        <dbReference type="PROSITE-ProRule" id="PRU00258"/>
    </source>
</evidence>
<evidence type="ECO:0000256" key="4">
    <source>
        <dbReference type="SAM" id="MobiDB-lite"/>
    </source>
</evidence>
<evidence type="ECO:0000269" key="5">
    <source>
    </source>
</evidence>
<evidence type="ECO:0000269" key="6">
    <source>
    </source>
</evidence>
<evidence type="ECO:0000303" key="7">
    <source>
    </source>
</evidence>
<evidence type="ECO:0000305" key="8"/>
<evidence type="ECO:0000312" key="9">
    <source>
        <dbReference type="EMBL" id="CAJ46692.1"/>
    </source>
</evidence>
<organism>
    <name type="scientific">Chondromyces crocatus</name>
    <dbReference type="NCBI Taxonomy" id="52"/>
    <lineage>
        <taxon>Bacteria</taxon>
        <taxon>Pseudomonadati</taxon>
        <taxon>Myxococcota</taxon>
        <taxon>Polyangia</taxon>
        <taxon>Polyangiales</taxon>
        <taxon>Polyangiaceae</taxon>
        <taxon>Chondromyces</taxon>
    </lineage>
</organism>
<feature type="chain" id="PRO_0000407279" description="Chondramide synthase cmdD">
    <location>
        <begin position="1"/>
        <end position="3912"/>
    </location>
</feature>
<feature type="domain" description="Carrier 1" evidence="3">
    <location>
        <begin position="1411"/>
        <end position="1485"/>
    </location>
</feature>
<feature type="domain" description="Carrier 2" evidence="3">
    <location>
        <begin position="2989"/>
        <end position="3064"/>
    </location>
</feature>
<feature type="region of interest" description="Disordered" evidence="4">
    <location>
        <begin position="1995"/>
        <end position="2030"/>
    </location>
</feature>
<feature type="compositionally biased region" description="Acidic residues" evidence="4">
    <location>
        <begin position="1995"/>
        <end position="2029"/>
    </location>
</feature>
<feature type="modified residue" description="O-(pantetheine 4'-phosphoryl)serine" evidence="1 3">
    <location>
        <position position="1446"/>
    </location>
</feature>
<feature type="modified residue" description="O-(pantetheine 4'-phosphoryl)serine" evidence="1 3">
    <location>
        <position position="3024"/>
    </location>
</feature>
<proteinExistence type="evidence at protein level"/>
<name>CHSAD_CHOCO</name>
<comment type="function">
    <text evidence="5 6">Involved in the synthesis of chondramides. Activates R-beta-tyrosine and probably phenylalanine.</text>
</comment>
<comment type="cofactor">
    <cofactor evidence="1">
        <name>pantetheine 4'-phosphate</name>
        <dbReference type="ChEBI" id="CHEBI:47942"/>
    </cofactor>
    <text evidence="1">Binds 2 phosphopantetheines covalently.</text>
</comment>
<comment type="biophysicochemical properties">
    <kinetics>
        <KM evidence="6">1.2 mM for R-beta-tyrosine</KM>
    </kinetics>
</comment>
<comment type="domain">
    <text evidence="5 6 8">Two module-bearing peptide synthase. Each module incorporates one amino acid into the peptide product and can be further subdivided into domains responsible for substrate adenylation, condensation and epimerization (Probable).</text>
</comment>
<comment type="miscellaneous">
    <text>Chondramides are secondary metabolites with antifungal and cytotoxic activity. They are non-ribosomally produced depsipeptides consisting of a polyketide chain and 3 amino acids (alanine, N-methyltryptophan and beta-tyrosine or alpha-methoxy-beta-tyrosine).</text>
</comment>
<comment type="similarity">
    <text evidence="2">Belongs to the ATP-dependent AMP-binding enzyme family.</text>
</comment>
<reference evidence="8 9" key="1">
    <citation type="journal article" date="2006" name="Chem. Biol.">
        <title>Molecular and biochemical studies of chondramide formation-highly cytotoxic natural products from Chondromyces crocatus Cm c5.</title>
        <authorList>
            <person name="Rachid S."/>
            <person name="Krug D."/>
            <person name="Kunze B."/>
            <person name="Kochems I."/>
            <person name="Scharfe M."/>
            <person name="Zabriskie T.M."/>
            <person name="Blocker H."/>
            <person name="Muller R."/>
        </authorList>
    </citation>
    <scope>NUCLEOTIDE SEQUENCE [GENOMIC DNA]</scope>
    <scope>FUNCTION</scope>
    <scope>DOMAIN</scope>
    <source>
        <strain evidence="5">DSM 14714 / JCM 12616 / Cm c5</strain>
    </source>
</reference>
<reference evidence="8" key="2">
    <citation type="journal article" date="2007" name="J. Biol. Chem.">
        <title>Biosynthesis of (R)-beta-tyrosine and its incorporation into the highly cytotoxic chondramides produced by Chondromyces crocatus.</title>
        <authorList>
            <person name="Rachid S."/>
            <person name="Krug D."/>
            <person name="Weissman K.J."/>
            <person name="Muller R."/>
        </authorList>
    </citation>
    <scope>FUNCTION</scope>
    <scope>BIOPHYSICOCHEMICAL PROPERTIES</scope>
    <scope>DOMAIN</scope>
    <source>
        <strain evidence="6">DSM 14714 / JCM 12616 / Cm c5</strain>
    </source>
</reference>
<accession>Q0VZ70</accession>
<sequence length="3912" mass="432413">MLREGQGTVAHAPPRPLPHADVLPVSQAQRRLWFLCQLDGASVAYNMPFVTALDGHLDARALQRALDEIIRRHESLRTTFRLQAEGPVQVIHPPAPLDLPLHDLRSLDEPARAAEIQRRIDRAAHQPFDIERGPLLRAQLLRQSETRHVLCLVIHHIVADGWSIGVFVREFEALYGAFSASRPSPLTEPPLQYADFSRWQEERFPPSAVERHLTYWKQKLSDVQPLQLPADHPRPAVESFRGDHTIFRLDRGLTRGLHELAQCEGVTLFITLLSAFNVLLGRYSGQDDLAIASGTANRKHAELEGLIGFFVNTVVIRTDLSGNPTFRTVLSRVLASVMEATEHEDLPFERVVEELKPERTASHNPLAQVALTLQSFASNRLTLPGLTTSPCDFRFRTSKLDLMLLVTEVDGELEVVVEYNTDLFEDATIARMSAHLRTVMAAMVADPGARIGDISLLTTEERHRLLVDWNDTALACPEAEGVHHAFEQNAARQPDAIAVVFDGDPISRITYGALNERANQLAHHLIQQGVGPDVVVGIHVERSITMIVALLAVLKAGGAYLPLDPTYPQQRLAFILADAGAQVILTQEKWFDDLPPHTARVLDLDAIAPQLDANATSNPPLRATADHLAYIIYTSGSTGNPKGVLIPRRDTWSVARALAETYALTPESRVLQFASLNFDGSVVEITMTLFSGAALHVAPQEKLLPGAPLNAFLQRHAITHVQLAPSLLARLPPEGLEHVRTIMVAGEASSVGTVRGWLPGRRILNGYGPTETTVGAAMIAFTEADDAYLAKLDALPIGRPFYNKRVYLLDARLQPVPVGVPGEIYVASPGLARGYINRPAATAEKFLPNPFSETPGERIYRTGDLARYLPDGNLVFLGRVDNQVKLRGLRIELEEIESALKSHPHVGDAAVIVHEAPADQATSERDGKRLVAYVVPRRGWEPEGAQSDHIASWQTLHEQLLDESQAPEDWSFNITGWKSSYTGEALPAAEMRLWVESTVERILAHGPKDVLEIGTGTGLLLARIAPRVRAYLATDFSLEAIRYLETCKARAPELSNVTLLQRMADDFTGFSAGQFDTIVLNSVVQYFPTLDYLSAVIEGALRVLKPGGTLFLGDIRNLALLDAFHASVQTAKASGTLSRDELRYRVQQGVMNENELVIDPRFFTALSRKFPQITHVEVTPKRGLHRNELTLFRYDVALQVGGTPKGAPTITWFDWREEGLTSDSLPPWLSDTLATSPDAGVGLRRVPNARLQPDLAILSWLATRAEASLDAWRARQHDVPEGCAPEALWALETTWPGRVHLSWAAGHPDGSFDLVVTPPQAERRAPWSPAVDLTDEQLSAYVNHPLQAKVVRETLGQELRRYLQDKLPAYMVPTVLIPLPALPLTSNGKLDRRALPAPDIERRSRASTYVAPRNAREETLVAIWSKVLGVDPIGVEDNFFELGGDSILSIQIVGQAKQAGFSLTSRQMFEHQTIAALAEVASASKSIQAEQGLVEGSIPLTPIQRWFFETHQETPDHFNQAILLKVSADVSASRLEQAFHHLFTHHDALRMRFSRTADGFEQVNLGPIEGVTVDVIDLAHLPAAEQTRALTEAATSLQQRLSITSGPLSRIALIHLGAEQPARLLWILHHLVVDGVSWRILLDDLVTVLRQLEAGQPARFPPKTTSFKEWSERLHATAQQEQANTASSRAERDAWRSVPVPALPLDHPQGTNRKASAAQVQVALSVADTHALLHDAPRAYGTQVNDLLLTALALAFNAWTGDATLALDLEGHGREEDLVGADLSRTVGWFTTMHPVALRLPGRELSLALRAVKEQLRAQPGRGIAYGLFRYASGEGSLASWPAPQVNFNYLGQLDAMTDTAPLLGFAPEEIGPSDGPTGDRTHLFQVNGMVKDGSLQFTWTYSRELHRPETVQKLAHDFAETARRLTQHCLAHESHPTPGDFPAVTLSQNQLDVVLDALGADRDNVAAIYPLTSLQEGLLFHSLSAVPAPVPALADEDDEEDDELDEEFDAEVDEEDEDEEEEEDDDGENVYVTQLVFRIQGPLDAEKFRTAWQETVQRHPLLRSRFVWEGCERPLQVVLRSADLRWEEDELEEDSWSSPLRVHARREQQAGMLLDEAPLFRLNLLRAEDTEHHLIWTSHHILLDGWSGPLILKDVFASYDAQLLGESRTAADPPPYEAYVAWLKRQDGTASERFWRENLRGFSAPTPLVVDNEEPTGKQKHLHHRCKLSAETSQALKALAESFRVTLSTVYQAAWALLLHRYSGMSDVLFGVTVSGREADVPGIEEMVGLFIRTVPLRLHVDESQTLGAWLKEVQARQIEQREHQYVSLVDIQRWSDVPGGTQLFDSMFVFENYPLDSALLEQSGLRLTVSTMASPTHYPLVIAVVPGRTVETLFDHDTSRLSKHTVERLAAHWVELLTGMARRPDARIHTLPHLTSAEREKLLVTWNARPYVDEQRKYRGEEEPFGEELAAESTFLDLFQHHVAQTPDALALVGPSLQSTDERPVSRTYRALSARVHLLARHLRGLGVGPEVTVGVCLDRSIELVIGMLAIFEAGGVYLPLDPSQPLERLAYLVSDARPEVVLTQQRWNDRLPEQATRRVALDTAWAEIEAQPEVSHQHRTAGDNLAYVLYTSGSTGTPKGVQVTVDNLSRLTPALITAFDVTPRSRVLQYSSLSFDGSISEVAMALGAGAALHLAPAHELVPGPPLQKLLATRAITHVTLLPAALRWLSPRGLPALDVLIVTGEACPASLVRTWASGRRFVNAYGPTEITVAATAMECPVTMFQETEQPPPIGCPLQSTEIYILDAHLRPVPVGVPGDLYIGGAKLTRGYIHRPALTAERYIPHPFSDRPGARLYVTGDIARYQLDGTIDFLGRRDNQVKVRGYRIELGEVEAALNDHPGVREAVVVAQKDGAGDNRLVAYWAAKSTPPTTTEALRDALSKRLAAYMIPSVFVRMDALPLNATGKIDRQGLPPVDDTMLDREQFVAPRTATEETLTAIWSSTLGVARVGIRDDFFKLGGHSLLALNITTQIQKRFGHVITVDSIFRAPTIAVLARVIDEALAPTGARRALSLVVPLRERGTKVPLFFAAGMGMHAHYLRPLAEHLGEDQPFYALQSPAQGGEITDMATLVDTLIGAIQQIQPSGPYHLGGHSAGARIAFAVALELQRRGAEVPLVSIVDMRPPGRGATSDESAEWTQIGGLIGYVTMIKQAIGEGVLFVTPEELRKLDEAAAWQRTLDAFIAARWMPKDADVEQLQHLCAMNQNVVRVVRDHVPTDTHQGKLLVFSAAFAMRNGRQVSTEGWQAFCANPVTTHEVPGDHMTMLREPDVRGLAIKLRREIDELALERTDEAPGLPTPPEFPVVWEHPEDARMLWVHDVTHCREQMTPLDFCLRQQAMVEGSNLANLAYGVPFTGEIRLINTYVYQKIIPTTASPTELAAAMKRAEASVAALLPDLGRWWTETLLPEIEAHLEALDPENNYDFVHRHTLVEALAEAHRRTARLWEIHFRLLQPVMLAISRFVDLCKDLSTDDDPIDPYALLVGFPNKTTEGNRALWSLSRLALETPEVASILTSNEASRVSWKLRSTRGGRAFVAQLDAYLATYGQRNDSTYLDAPTWEEDPTPVIRNLQAYMTQPERDLDAELNALSEQRTQRLDALRARLRHYPRAVVDEFEQALTAAQTATVLSEDHNYWIDYKITHRLRHLCLYLGEQLKDWELLGDCEEIFYLSMDDVSRAAVETKRGGPFSANQRFYHLACARKDEAKRFHGVQPPRFLGTPSPLPALHDALSLASARFTGVAPSPSNDEKEIVGLSGAKGKARGKARVARNLADVPTLEPGEILVAMAMLPAWTPLFATVAAIVTDSGGMLSHAAVVAREYGIPAVVGTQVGTQRIRDGQLVEVDGERGVVTLL</sequence>
<dbReference type="EMBL" id="AM179409">
    <property type="protein sequence ID" value="CAJ46692.1"/>
    <property type="molecule type" value="Genomic_DNA"/>
</dbReference>
<dbReference type="SMR" id="Q0VZ70"/>
<dbReference type="STRING" id="52.CMC5_047510"/>
<dbReference type="ESTHER" id="choco-chsad">
    <property type="family name" value="Thioesterase"/>
</dbReference>
<dbReference type="GO" id="GO:0005829">
    <property type="term" value="C:cytosol"/>
    <property type="evidence" value="ECO:0007669"/>
    <property type="project" value="TreeGrafter"/>
</dbReference>
<dbReference type="GO" id="GO:0016874">
    <property type="term" value="F:ligase activity"/>
    <property type="evidence" value="ECO:0007669"/>
    <property type="project" value="UniProtKB-KW"/>
</dbReference>
<dbReference type="GO" id="GO:0031177">
    <property type="term" value="F:phosphopantetheine binding"/>
    <property type="evidence" value="ECO:0007669"/>
    <property type="project" value="InterPro"/>
</dbReference>
<dbReference type="GO" id="GO:0016772">
    <property type="term" value="F:transferase activity, transferring phosphorus-containing groups"/>
    <property type="evidence" value="ECO:0007669"/>
    <property type="project" value="InterPro"/>
</dbReference>
<dbReference type="GO" id="GO:0043042">
    <property type="term" value="P:amino acid adenylylation by nonribosomal peptide synthase"/>
    <property type="evidence" value="ECO:0000314"/>
    <property type="project" value="UniProtKB"/>
</dbReference>
<dbReference type="GO" id="GO:0009403">
    <property type="term" value="P:toxin biosynthetic process"/>
    <property type="evidence" value="ECO:0000314"/>
    <property type="project" value="UniProtKB"/>
</dbReference>
<dbReference type="CDD" id="cd05930">
    <property type="entry name" value="A_NRPS"/>
    <property type="match status" value="1"/>
</dbReference>
<dbReference type="CDD" id="cd17652">
    <property type="entry name" value="A_NRPS_CmdD_like"/>
    <property type="match status" value="1"/>
</dbReference>
<dbReference type="CDD" id="cd02440">
    <property type="entry name" value="AdoMet_MTases"/>
    <property type="match status" value="1"/>
</dbReference>
<dbReference type="CDD" id="cd19543">
    <property type="entry name" value="DCL_NRPS"/>
    <property type="match status" value="1"/>
</dbReference>
<dbReference type="CDD" id="cd19534">
    <property type="entry name" value="E_NRPS"/>
    <property type="match status" value="1"/>
</dbReference>
<dbReference type="CDD" id="cd19531">
    <property type="entry name" value="LCL_NRPS-like"/>
    <property type="match status" value="1"/>
</dbReference>
<dbReference type="FunFam" id="3.30.300.30:FF:000084">
    <property type="entry name" value="Enniatin synthase"/>
    <property type="match status" value="1"/>
</dbReference>
<dbReference type="FunFam" id="3.30.300.30:FF:000010">
    <property type="entry name" value="Enterobactin synthetase component F"/>
    <property type="match status" value="1"/>
</dbReference>
<dbReference type="FunFam" id="3.30.559.10:FF:000012">
    <property type="entry name" value="Non-ribosomal peptide synthetase"/>
    <property type="match status" value="1"/>
</dbReference>
<dbReference type="FunFam" id="3.40.50.12780:FF:000012">
    <property type="entry name" value="Non-ribosomal peptide synthetase"/>
    <property type="match status" value="2"/>
</dbReference>
<dbReference type="FunFam" id="3.40.50.980:FF:000001">
    <property type="entry name" value="Non-ribosomal peptide synthetase"/>
    <property type="match status" value="2"/>
</dbReference>
<dbReference type="FunFam" id="2.30.38.10:FF:000001">
    <property type="entry name" value="Non-ribosomal peptide synthetase PvdI"/>
    <property type="match status" value="2"/>
</dbReference>
<dbReference type="FunFam" id="1.10.1200.10:FF:000005">
    <property type="entry name" value="Nonribosomal peptide synthetase 1"/>
    <property type="match status" value="2"/>
</dbReference>
<dbReference type="Gene3D" id="3.30.300.30">
    <property type="match status" value="3"/>
</dbReference>
<dbReference type="Gene3D" id="3.40.50.980">
    <property type="match status" value="4"/>
</dbReference>
<dbReference type="Gene3D" id="1.10.1200.10">
    <property type="entry name" value="ACP-like"/>
    <property type="match status" value="2"/>
</dbReference>
<dbReference type="Gene3D" id="3.40.50.1820">
    <property type="entry name" value="alpha/beta hydrolase"/>
    <property type="match status" value="1"/>
</dbReference>
<dbReference type="Gene3D" id="3.30.559.10">
    <property type="entry name" value="Chloramphenicol acetyltransferase-like domain"/>
    <property type="match status" value="3"/>
</dbReference>
<dbReference type="Gene3D" id="2.30.38.10">
    <property type="entry name" value="Luciferase, Domain 3"/>
    <property type="match status" value="2"/>
</dbReference>
<dbReference type="Gene3D" id="3.30.559.30">
    <property type="entry name" value="Nonribosomal peptide synthetase, condensation domain"/>
    <property type="match status" value="3"/>
</dbReference>
<dbReference type="Gene3D" id="3.50.30.10">
    <property type="entry name" value="Phosphohistidine domain"/>
    <property type="match status" value="1"/>
</dbReference>
<dbReference type="Gene3D" id="3.40.50.150">
    <property type="entry name" value="Vaccinia Virus protein VP39"/>
    <property type="match status" value="1"/>
</dbReference>
<dbReference type="InterPro" id="IPR010071">
    <property type="entry name" value="AA_adenyl_dom"/>
</dbReference>
<dbReference type="InterPro" id="IPR029058">
    <property type="entry name" value="AB_hydrolase_fold"/>
</dbReference>
<dbReference type="InterPro" id="IPR036736">
    <property type="entry name" value="ACP-like_sf"/>
</dbReference>
<dbReference type="InterPro" id="IPR025110">
    <property type="entry name" value="AMP-bd_C"/>
</dbReference>
<dbReference type="InterPro" id="IPR045851">
    <property type="entry name" value="AMP-bd_C_sf"/>
</dbReference>
<dbReference type="InterPro" id="IPR020845">
    <property type="entry name" value="AMP-binding_CS"/>
</dbReference>
<dbReference type="InterPro" id="IPR000873">
    <property type="entry name" value="AMP-dep_synth/lig_dom"/>
</dbReference>
<dbReference type="InterPro" id="IPR023213">
    <property type="entry name" value="CAT-like_dom_sf"/>
</dbReference>
<dbReference type="InterPro" id="IPR001242">
    <property type="entry name" value="Condensatn"/>
</dbReference>
<dbReference type="InterPro" id="IPR000253">
    <property type="entry name" value="FHA_dom"/>
</dbReference>
<dbReference type="InterPro" id="IPR013217">
    <property type="entry name" value="Methyltransf_12"/>
</dbReference>
<dbReference type="InterPro" id="IPR010060">
    <property type="entry name" value="NRPS_synth"/>
</dbReference>
<dbReference type="InterPro" id="IPR008279">
    <property type="entry name" value="PEP-util_enz_mobile_dom"/>
</dbReference>
<dbReference type="InterPro" id="IPR036637">
    <property type="entry name" value="Phosphohistidine_dom_sf"/>
</dbReference>
<dbReference type="InterPro" id="IPR020806">
    <property type="entry name" value="PKS_PP-bd"/>
</dbReference>
<dbReference type="InterPro" id="IPR020802">
    <property type="entry name" value="PKS_thioesterase"/>
</dbReference>
<dbReference type="InterPro" id="IPR009081">
    <property type="entry name" value="PP-bd_ACP"/>
</dbReference>
<dbReference type="InterPro" id="IPR006162">
    <property type="entry name" value="Ppantetheine_attach_site"/>
</dbReference>
<dbReference type="InterPro" id="IPR029063">
    <property type="entry name" value="SAM-dependent_MTases_sf"/>
</dbReference>
<dbReference type="InterPro" id="IPR001031">
    <property type="entry name" value="Thioesterase"/>
</dbReference>
<dbReference type="NCBIfam" id="TIGR01733">
    <property type="entry name" value="AA-adenyl-dom"/>
    <property type="match status" value="2"/>
</dbReference>
<dbReference type="NCBIfam" id="TIGR01720">
    <property type="entry name" value="NRPS-para261"/>
    <property type="match status" value="1"/>
</dbReference>
<dbReference type="NCBIfam" id="NF003417">
    <property type="entry name" value="PRK04813.1"/>
    <property type="match status" value="3"/>
</dbReference>
<dbReference type="PANTHER" id="PTHR45527:SF1">
    <property type="entry name" value="FATTY ACID SYNTHASE"/>
    <property type="match status" value="1"/>
</dbReference>
<dbReference type="PANTHER" id="PTHR45527">
    <property type="entry name" value="NONRIBOSOMAL PEPTIDE SYNTHETASE"/>
    <property type="match status" value="1"/>
</dbReference>
<dbReference type="Pfam" id="PF00501">
    <property type="entry name" value="AMP-binding"/>
    <property type="match status" value="2"/>
</dbReference>
<dbReference type="Pfam" id="PF13193">
    <property type="entry name" value="AMP-binding_C"/>
    <property type="match status" value="1"/>
</dbReference>
<dbReference type="Pfam" id="PF00668">
    <property type="entry name" value="Condensation"/>
    <property type="match status" value="3"/>
</dbReference>
<dbReference type="Pfam" id="PF08242">
    <property type="entry name" value="Methyltransf_12"/>
    <property type="match status" value="1"/>
</dbReference>
<dbReference type="Pfam" id="PF00391">
    <property type="entry name" value="PEP-utilizers"/>
    <property type="match status" value="1"/>
</dbReference>
<dbReference type="Pfam" id="PF00550">
    <property type="entry name" value="PP-binding"/>
    <property type="match status" value="2"/>
</dbReference>
<dbReference type="Pfam" id="PF00975">
    <property type="entry name" value="Thioesterase"/>
    <property type="match status" value="1"/>
</dbReference>
<dbReference type="SMART" id="SM00823">
    <property type="entry name" value="PKS_PP"/>
    <property type="match status" value="2"/>
</dbReference>
<dbReference type="SMART" id="SM00824">
    <property type="entry name" value="PKS_TE"/>
    <property type="match status" value="1"/>
</dbReference>
<dbReference type="SUPFAM" id="SSF56801">
    <property type="entry name" value="Acetyl-CoA synthetase-like"/>
    <property type="match status" value="2"/>
</dbReference>
<dbReference type="SUPFAM" id="SSF47336">
    <property type="entry name" value="ACP-like"/>
    <property type="match status" value="2"/>
</dbReference>
<dbReference type="SUPFAM" id="SSF53474">
    <property type="entry name" value="alpha/beta-Hydrolases"/>
    <property type="match status" value="1"/>
</dbReference>
<dbReference type="SUPFAM" id="SSF52777">
    <property type="entry name" value="CoA-dependent acyltransferases"/>
    <property type="match status" value="6"/>
</dbReference>
<dbReference type="SUPFAM" id="SSF52009">
    <property type="entry name" value="Phosphohistidine domain"/>
    <property type="match status" value="1"/>
</dbReference>
<dbReference type="SUPFAM" id="SSF53335">
    <property type="entry name" value="S-adenosyl-L-methionine-dependent methyltransferases"/>
    <property type="match status" value="1"/>
</dbReference>
<dbReference type="PROSITE" id="PS00455">
    <property type="entry name" value="AMP_BINDING"/>
    <property type="match status" value="2"/>
</dbReference>
<dbReference type="PROSITE" id="PS50075">
    <property type="entry name" value="CARRIER"/>
    <property type="match status" value="2"/>
</dbReference>
<dbReference type="PROSITE" id="PS00012">
    <property type="entry name" value="PHOSPHOPANTETHEINE"/>
    <property type="match status" value="2"/>
</dbReference>